<reference key="1">
    <citation type="journal article" date="2001" name="Cytogenet. Cell Genet.">
        <title>Comparative genomic sequencing reveals a strikingly similar architecture of a conserved syntenic region on human chromosome 11p15.3 (including gene ST5) and mouse chromosome 7.</title>
        <authorList>
            <person name="Amid C."/>
            <person name="Bahr A."/>
            <person name="Mujica A."/>
            <person name="Sampson N."/>
            <person name="Bikar S.E."/>
            <person name="Winterpacht A."/>
            <person name="Zabel B."/>
            <person name="Hankeln T."/>
            <person name="Schmidt E.R."/>
        </authorList>
    </citation>
    <scope>NUCLEOTIDE SEQUENCE [GENOMIC DNA] (ISOFORM 2)</scope>
</reference>
<reference key="2">
    <citation type="journal article" date="1997" name="DNA Res.">
        <title>Prediction of the coding sequences of unidentified human genes. VII. The complete sequences of 100 new cDNA clones from brain which can code for large proteins in vitro.</title>
        <authorList>
            <person name="Nagase T."/>
            <person name="Ishikawa K."/>
            <person name="Nakajima D."/>
            <person name="Ohira M."/>
            <person name="Seki N."/>
            <person name="Miyajima N."/>
            <person name="Tanaka A."/>
            <person name="Kotani H."/>
            <person name="Nomura N."/>
            <person name="Ohara O."/>
        </authorList>
    </citation>
    <scope>NUCLEOTIDE SEQUENCE [LARGE SCALE MRNA] (ISOFORM 3)</scope>
    <source>
        <tissue>Brain</tissue>
    </source>
</reference>
<reference key="3">
    <citation type="submission" date="1999-12" db="EMBL/GenBank/DDBJ databases">
        <authorList>
            <person name="Nagase T."/>
            <person name="Ishikawa K."/>
            <person name="Seki N."/>
            <person name="Nakajima D."/>
            <person name="Ohira M."/>
            <person name="Miyajima N."/>
            <person name="Kotani H."/>
            <person name="Nomura N."/>
            <person name="Ohara O."/>
        </authorList>
    </citation>
    <scope>SEQUENCE REVISION</scope>
</reference>
<reference key="4">
    <citation type="journal article" date="2006" name="Nature">
        <title>Human chromosome 11 DNA sequence and analysis including novel gene identification.</title>
        <authorList>
            <person name="Taylor T.D."/>
            <person name="Noguchi H."/>
            <person name="Totoki Y."/>
            <person name="Toyoda A."/>
            <person name="Kuroki Y."/>
            <person name="Dewar K."/>
            <person name="Lloyd C."/>
            <person name="Itoh T."/>
            <person name="Takeda T."/>
            <person name="Kim D.-W."/>
            <person name="She X."/>
            <person name="Barlow K.F."/>
            <person name="Bloom T."/>
            <person name="Bruford E."/>
            <person name="Chang J.L."/>
            <person name="Cuomo C.A."/>
            <person name="Eichler E."/>
            <person name="FitzGerald M.G."/>
            <person name="Jaffe D.B."/>
            <person name="LaButti K."/>
            <person name="Nicol R."/>
            <person name="Park H.-S."/>
            <person name="Seaman C."/>
            <person name="Sougnez C."/>
            <person name="Yang X."/>
            <person name="Zimmer A.R."/>
            <person name="Zody M.C."/>
            <person name="Birren B.W."/>
            <person name="Nusbaum C."/>
            <person name="Fujiyama A."/>
            <person name="Hattori M."/>
            <person name="Rogers J."/>
            <person name="Lander E.S."/>
            <person name="Sakaki Y."/>
        </authorList>
    </citation>
    <scope>NUCLEOTIDE SEQUENCE [LARGE SCALE GENOMIC DNA]</scope>
</reference>
<reference key="5">
    <citation type="journal article" date="2015" name="Genes Dev.">
        <title>Screen identifies bromodomain protein ZMYND8 in chromatin recognition of transcription-associated DNA damage that promotes homologous recombination.</title>
        <authorList>
            <person name="Gong F."/>
            <person name="Chiu L.Y."/>
            <person name="Cox B."/>
            <person name="Aymard F."/>
            <person name="Clouaire T."/>
            <person name="Leung J.W."/>
            <person name="Cammarata M."/>
            <person name="Perez M."/>
            <person name="Agarwal P."/>
            <person name="Brodbelt J.S."/>
            <person name="Legube G."/>
            <person name="Miller K.M."/>
        </authorList>
    </citation>
    <scope>SUBCELLULAR LOCATION</scope>
</reference>
<protein>
    <recommendedName>
        <fullName>Tripartite motif-containing protein 66</fullName>
    </recommendedName>
</protein>
<dbReference type="EMBL" id="AJ400879">
    <property type="protein sequence ID" value="CAC35389.1"/>
    <property type="molecule type" value="Genomic_DNA"/>
</dbReference>
<dbReference type="EMBL" id="AB002296">
    <property type="protein sequence ID" value="BAA20758.2"/>
    <property type="status" value="ALT_INIT"/>
    <property type="molecule type" value="mRNA"/>
</dbReference>
<dbReference type="EMBL" id="AC091053">
    <property type="status" value="NOT_ANNOTATED_CDS"/>
    <property type="molecule type" value="Genomic_DNA"/>
</dbReference>
<dbReference type="EMBL" id="AC104360">
    <property type="status" value="NOT_ANNOTATED_CDS"/>
    <property type="molecule type" value="Genomic_DNA"/>
</dbReference>
<dbReference type="RefSeq" id="NP_055633.1">
    <property type="nucleotide sequence ID" value="NM_014818.1"/>
</dbReference>
<dbReference type="PDB" id="6IET">
    <property type="method" value="X-ray"/>
    <property type="resolution" value="2.10 A"/>
    <property type="chains" value="A=1103-1295"/>
</dbReference>
<dbReference type="PDB" id="6IEU">
    <property type="method" value="X-ray"/>
    <property type="resolution" value="1.79 A"/>
    <property type="chains" value="A=1103-1295"/>
</dbReference>
<dbReference type="PDB" id="8JZW">
    <property type="method" value="X-ray"/>
    <property type="resolution" value="1.80 A"/>
    <property type="chains" value="E/F=989-1006"/>
</dbReference>
<dbReference type="PDBsum" id="6IET"/>
<dbReference type="PDBsum" id="6IEU"/>
<dbReference type="PDBsum" id="8JZW"/>
<dbReference type="SMR" id="O15016"/>
<dbReference type="BioGRID" id="115199">
    <property type="interactions" value="201"/>
</dbReference>
<dbReference type="FunCoup" id="O15016">
    <property type="interactions" value="962"/>
</dbReference>
<dbReference type="IntAct" id="O15016">
    <property type="interactions" value="3"/>
</dbReference>
<dbReference type="STRING" id="9606.ENSP00000495413"/>
<dbReference type="ChEMBL" id="CHEMBL4296267"/>
<dbReference type="GlyGen" id="O15016">
    <property type="glycosylation" value="1 site, 1 O-linked glycan (1 site)"/>
</dbReference>
<dbReference type="iPTMnet" id="O15016"/>
<dbReference type="PhosphoSitePlus" id="O15016"/>
<dbReference type="BioMuta" id="TRIM66"/>
<dbReference type="jPOST" id="O15016"/>
<dbReference type="MassIVE" id="O15016"/>
<dbReference type="PaxDb" id="9606-ENSP00000384876"/>
<dbReference type="PeptideAtlas" id="O15016"/>
<dbReference type="ProteomicsDB" id="48372">
    <molecule id="O15016-1"/>
</dbReference>
<dbReference type="ProteomicsDB" id="48373">
    <molecule id="O15016-2"/>
</dbReference>
<dbReference type="Antibodypedia" id="5888">
    <property type="antibodies" value="24 antibodies from 12 providers"/>
</dbReference>
<dbReference type="DNASU" id="9866"/>
<dbReference type="GeneID" id="9866"/>
<dbReference type="KEGG" id="hsa:9866"/>
<dbReference type="UCSC" id="uc010rbo.2">
    <molecule id="O15016-1"/>
    <property type="organism name" value="human"/>
</dbReference>
<dbReference type="AGR" id="HGNC:29005"/>
<dbReference type="CTD" id="9866"/>
<dbReference type="DisGeNET" id="9866"/>
<dbReference type="GeneCards" id="TRIM66"/>
<dbReference type="HGNC" id="HGNC:29005">
    <property type="gene designation" value="TRIM66"/>
</dbReference>
<dbReference type="MIM" id="612000">
    <property type="type" value="gene"/>
</dbReference>
<dbReference type="neXtProt" id="NX_O15016"/>
<dbReference type="PharmGKB" id="PA134954583"/>
<dbReference type="VEuPathDB" id="HostDB:ENSG00000166436"/>
<dbReference type="eggNOG" id="KOG2177">
    <property type="taxonomic scope" value="Eukaryota"/>
</dbReference>
<dbReference type="HOGENOM" id="CLU_005817_1_0_1"/>
<dbReference type="InParanoid" id="O15016"/>
<dbReference type="OrthoDB" id="1870062at2759"/>
<dbReference type="PAN-GO" id="O15016">
    <property type="GO annotations" value="0 GO annotations based on evolutionary models"/>
</dbReference>
<dbReference type="PhylomeDB" id="O15016"/>
<dbReference type="PathwayCommons" id="O15016"/>
<dbReference type="SignaLink" id="O15016"/>
<dbReference type="BioGRID-ORCS" id="9866">
    <property type="hits" value="3 hits in 329 CRISPR screens"/>
</dbReference>
<dbReference type="ChiTaRS" id="TRIM66">
    <property type="organism name" value="human"/>
</dbReference>
<dbReference type="GenomeRNAi" id="9866"/>
<dbReference type="Pharos" id="O15016">
    <property type="development level" value="Tbio"/>
</dbReference>
<dbReference type="PRO" id="PR:O15016"/>
<dbReference type="Proteomes" id="UP000005640">
    <property type="component" value="Chromosome 11"/>
</dbReference>
<dbReference type="RNAct" id="O15016">
    <property type="molecule type" value="protein"/>
</dbReference>
<dbReference type="Bgee" id="ENSG00000166436">
    <property type="expression patterns" value="Expressed in sural nerve and 151 other cell types or tissues"/>
</dbReference>
<dbReference type="GO" id="GO:0000785">
    <property type="term" value="C:chromatin"/>
    <property type="evidence" value="ECO:0000318"/>
    <property type="project" value="GO_Central"/>
</dbReference>
<dbReference type="GO" id="GO:0005634">
    <property type="term" value="C:nucleus"/>
    <property type="evidence" value="ECO:0000314"/>
    <property type="project" value="UniProtKB"/>
</dbReference>
<dbReference type="GO" id="GO:0008270">
    <property type="term" value="F:zinc ion binding"/>
    <property type="evidence" value="ECO:0007669"/>
    <property type="project" value="UniProtKB-KW"/>
</dbReference>
<dbReference type="CDD" id="cd19811">
    <property type="entry name" value="Bbox1_TRIM66"/>
    <property type="match status" value="1"/>
</dbReference>
<dbReference type="CDD" id="cd19794">
    <property type="entry name" value="Bbox2_TRIM66-like"/>
    <property type="match status" value="1"/>
</dbReference>
<dbReference type="CDD" id="cd05502">
    <property type="entry name" value="Bromo_tif1_like"/>
    <property type="match status" value="1"/>
</dbReference>
<dbReference type="FunFam" id="3.30.160.60:FF:000074">
    <property type="entry name" value="Tripartite motif containing 66"/>
    <property type="match status" value="1"/>
</dbReference>
<dbReference type="FunFam" id="1.20.920.10:FF:000036">
    <property type="entry name" value="Tripartite motif-containing protein 66"/>
    <property type="match status" value="1"/>
</dbReference>
<dbReference type="FunFam" id="3.30.40.10:FF:000313">
    <property type="entry name" value="Tripartite motif-containing protein 66"/>
    <property type="match status" value="1"/>
</dbReference>
<dbReference type="Gene3D" id="1.20.920.10">
    <property type="entry name" value="Bromodomain-like"/>
    <property type="match status" value="1"/>
</dbReference>
<dbReference type="Gene3D" id="3.30.160.60">
    <property type="entry name" value="Classic Zinc Finger"/>
    <property type="match status" value="1"/>
</dbReference>
<dbReference type="Gene3D" id="3.30.40.10">
    <property type="entry name" value="Zinc/RING finger domain, C3HC4 (zinc finger)"/>
    <property type="match status" value="1"/>
</dbReference>
<dbReference type="InterPro" id="IPR003649">
    <property type="entry name" value="Bbox_C"/>
</dbReference>
<dbReference type="InterPro" id="IPR001487">
    <property type="entry name" value="Bromodomain"/>
</dbReference>
<dbReference type="InterPro" id="IPR036427">
    <property type="entry name" value="Bromodomain-like_sf"/>
</dbReference>
<dbReference type="InterPro" id="IPR037372">
    <property type="entry name" value="TRIM66_Bbox1_Znf"/>
</dbReference>
<dbReference type="InterPro" id="IPR019786">
    <property type="entry name" value="Zinc_finger_PHD-type_CS"/>
</dbReference>
<dbReference type="InterPro" id="IPR000315">
    <property type="entry name" value="Znf_B-box"/>
</dbReference>
<dbReference type="InterPro" id="IPR011011">
    <property type="entry name" value="Znf_FYVE_PHD"/>
</dbReference>
<dbReference type="InterPro" id="IPR001965">
    <property type="entry name" value="Znf_PHD"/>
</dbReference>
<dbReference type="InterPro" id="IPR019787">
    <property type="entry name" value="Znf_PHD-finger"/>
</dbReference>
<dbReference type="InterPro" id="IPR013083">
    <property type="entry name" value="Znf_RING/FYVE/PHD"/>
</dbReference>
<dbReference type="PANTHER" id="PTHR45915">
    <property type="entry name" value="TRANSCRIPTION INTERMEDIARY FACTOR"/>
    <property type="match status" value="1"/>
</dbReference>
<dbReference type="PANTHER" id="PTHR45915:SF7">
    <property type="entry name" value="TRIPARTITE MOTIF-CONTAINING PROTEIN 66"/>
    <property type="match status" value="1"/>
</dbReference>
<dbReference type="Pfam" id="PF00439">
    <property type="entry name" value="Bromodomain"/>
    <property type="match status" value="1"/>
</dbReference>
<dbReference type="Pfam" id="PF00628">
    <property type="entry name" value="PHD"/>
    <property type="match status" value="1"/>
</dbReference>
<dbReference type="Pfam" id="PF00643">
    <property type="entry name" value="zf-B_box"/>
    <property type="match status" value="1"/>
</dbReference>
<dbReference type="Pfam" id="PF25287">
    <property type="entry name" value="zf-B_box_Trim66"/>
    <property type="match status" value="1"/>
</dbReference>
<dbReference type="SMART" id="SM00502">
    <property type="entry name" value="BBC"/>
    <property type="match status" value="1"/>
</dbReference>
<dbReference type="SMART" id="SM00336">
    <property type="entry name" value="BBOX"/>
    <property type="match status" value="2"/>
</dbReference>
<dbReference type="SMART" id="SM00297">
    <property type="entry name" value="BROMO"/>
    <property type="match status" value="1"/>
</dbReference>
<dbReference type="SMART" id="SM00249">
    <property type="entry name" value="PHD"/>
    <property type="match status" value="2"/>
</dbReference>
<dbReference type="SUPFAM" id="SSF57845">
    <property type="entry name" value="B-box zinc-binding domain"/>
    <property type="match status" value="1"/>
</dbReference>
<dbReference type="SUPFAM" id="SSF47370">
    <property type="entry name" value="Bromodomain"/>
    <property type="match status" value="1"/>
</dbReference>
<dbReference type="SUPFAM" id="SSF57903">
    <property type="entry name" value="FYVE/PHD zinc finger"/>
    <property type="match status" value="1"/>
</dbReference>
<dbReference type="PROSITE" id="PS50014">
    <property type="entry name" value="BROMODOMAIN_2"/>
    <property type="match status" value="1"/>
</dbReference>
<dbReference type="PROSITE" id="PS50119">
    <property type="entry name" value="ZF_BBOX"/>
    <property type="match status" value="2"/>
</dbReference>
<dbReference type="PROSITE" id="PS01359">
    <property type="entry name" value="ZF_PHD_1"/>
    <property type="match status" value="1"/>
</dbReference>
<dbReference type="PROSITE" id="PS50016">
    <property type="entry name" value="ZF_PHD_2"/>
    <property type="match status" value="1"/>
</dbReference>
<evidence type="ECO:0000250" key="1">
    <source>
        <dbReference type="UniProtKB" id="Q924W6"/>
    </source>
</evidence>
<evidence type="ECO:0000255" key="2"/>
<evidence type="ECO:0000255" key="3">
    <source>
        <dbReference type="PROSITE-ProRule" id="PRU00024"/>
    </source>
</evidence>
<evidence type="ECO:0000255" key="4">
    <source>
        <dbReference type="PROSITE-ProRule" id="PRU00035"/>
    </source>
</evidence>
<evidence type="ECO:0000255" key="5">
    <source>
        <dbReference type="PROSITE-ProRule" id="PRU00146"/>
    </source>
</evidence>
<evidence type="ECO:0000256" key="6">
    <source>
        <dbReference type="SAM" id="MobiDB-lite"/>
    </source>
</evidence>
<evidence type="ECO:0000269" key="7">
    <source>
    </source>
</evidence>
<evidence type="ECO:0000303" key="8">
    <source>
    </source>
</evidence>
<evidence type="ECO:0000303" key="9">
    <source>
    </source>
</evidence>
<evidence type="ECO:0000305" key="10"/>
<evidence type="ECO:0007829" key="11">
    <source>
        <dbReference type="PDB" id="6IEU"/>
    </source>
</evidence>
<proteinExistence type="evidence at protein level"/>
<name>TRI66_HUMAN</name>
<accession>O15016</accession>
<accession>A0A2R8YEA1</accession>
<accession>Q9BQQ4</accession>
<keyword id="KW-0002">3D-structure</keyword>
<keyword id="KW-0025">Alternative splicing</keyword>
<keyword id="KW-0103">Bromodomain</keyword>
<keyword id="KW-0175">Coiled coil</keyword>
<keyword id="KW-0479">Metal-binding</keyword>
<keyword id="KW-0539">Nucleus</keyword>
<keyword id="KW-1267">Proteomics identification</keyword>
<keyword id="KW-1185">Reference proteome</keyword>
<keyword id="KW-0677">Repeat</keyword>
<keyword id="KW-0862">Zinc</keyword>
<keyword id="KW-0863">Zinc-finger</keyword>
<organism>
    <name type="scientific">Homo sapiens</name>
    <name type="common">Human</name>
    <dbReference type="NCBI Taxonomy" id="9606"/>
    <lineage>
        <taxon>Eukaryota</taxon>
        <taxon>Metazoa</taxon>
        <taxon>Chordata</taxon>
        <taxon>Craniata</taxon>
        <taxon>Vertebrata</taxon>
        <taxon>Euteleostomi</taxon>
        <taxon>Mammalia</taxon>
        <taxon>Eutheria</taxon>
        <taxon>Euarchontoglires</taxon>
        <taxon>Primates</taxon>
        <taxon>Haplorrhini</taxon>
        <taxon>Catarrhini</taxon>
        <taxon>Hominidae</taxon>
        <taxon>Homo</taxon>
    </lineage>
</organism>
<comment type="function">
    <text evidence="1">May function as transcription repressor; The repressive effects are mediated, at least in part, by recruitment of deacetylase activity. May play a role as negative regulator of postmeiotic genes acting through CBX3 complex formation and centromere association (By similarity).</text>
</comment>
<comment type="subunit">
    <text evidence="1">Can form homodimers and heterodimers. Interacts with CBX5, CBX1 and CBX3 via PxVxL motif (By similarity).</text>
</comment>
<comment type="subcellular location">
    <subcellularLocation>
        <location evidence="7">Nucleus</location>
    </subcellularLocation>
    <text evidence="1">Forms discrete foci within the centromeric chromocenter and surrounding nucleoplasm.</text>
</comment>
<comment type="alternative products">
    <event type="alternative splicing"/>
    <isoform>
        <id>O15016-1</id>
        <name>1</name>
        <sequence type="displayed"/>
    </isoform>
    <isoform>
        <id>O15016-2</id>
        <name>2</name>
        <sequence type="described" ref="VSP_061677 VSP_061678 VSP_061680"/>
    </isoform>
    <isoform>
        <id>O15016-3</id>
        <name>3</name>
        <sequence type="described" ref="VSP_061677 VSP_061679 VSP_061681"/>
    </isoform>
</comment>
<comment type="sequence caution" evidence="10">
    <conflict type="erroneous initiation">
        <sequence resource="EMBL-CDS" id="BAA20758"/>
    </conflict>
    <text>Extended N-terminus.</text>
</comment>
<feature type="chain" id="PRO_0000220375" description="Tripartite motif-containing protein 66">
    <location>
        <begin position="1"/>
        <end position="1351"/>
    </location>
</feature>
<feature type="domain" description="Bromo" evidence="4">
    <location>
        <begin position="1176"/>
        <end position="1282"/>
    </location>
</feature>
<feature type="zinc finger region" description="B box-type 1; atypical" evidence="3">
    <location>
        <begin position="105"/>
        <end position="150"/>
    </location>
</feature>
<feature type="zinc finger region" description="B box-type 2" evidence="3">
    <location>
        <begin position="164"/>
        <end position="205"/>
    </location>
</feature>
<feature type="zinc finger region" description="PHD-type" evidence="5">
    <location>
        <begin position="1105"/>
        <end position="1152"/>
    </location>
</feature>
<feature type="region of interest" description="Disordered" evidence="6">
    <location>
        <begin position="542"/>
        <end position="608"/>
    </location>
</feature>
<feature type="region of interest" description="Disordered" evidence="6">
    <location>
        <begin position="663"/>
        <end position="730"/>
    </location>
</feature>
<feature type="region of interest" description="Disordered" evidence="6">
    <location>
        <begin position="857"/>
        <end position="895"/>
    </location>
</feature>
<feature type="region of interest" description="Disordered" evidence="6">
    <location>
        <begin position="1067"/>
        <end position="1098"/>
    </location>
</feature>
<feature type="region of interest" description="Disordered" evidence="6">
    <location>
        <begin position="1289"/>
        <end position="1351"/>
    </location>
</feature>
<feature type="coiled-coil region" evidence="2">
    <location>
        <begin position="234"/>
        <end position="304"/>
    </location>
</feature>
<feature type="short sequence motif" description="PxVxL motif">
    <location>
        <begin position="995"/>
        <end position="999"/>
    </location>
</feature>
<feature type="compositionally biased region" description="Pro residues" evidence="6">
    <location>
        <begin position="560"/>
        <end position="588"/>
    </location>
</feature>
<feature type="compositionally biased region" description="Polar residues" evidence="6">
    <location>
        <begin position="664"/>
        <end position="676"/>
    </location>
</feature>
<feature type="compositionally biased region" description="Low complexity" evidence="6">
    <location>
        <begin position="872"/>
        <end position="884"/>
    </location>
</feature>
<feature type="binding site" evidence="3">
    <location>
        <position position="109"/>
    </location>
    <ligand>
        <name>Zn(2+)</name>
        <dbReference type="ChEBI" id="CHEBI:29105"/>
        <label>1</label>
    </ligand>
</feature>
<feature type="binding site" evidence="3">
    <location>
        <position position="112"/>
    </location>
    <ligand>
        <name>Zn(2+)</name>
        <dbReference type="ChEBI" id="CHEBI:29105"/>
        <label>1</label>
    </ligand>
</feature>
<feature type="binding site" evidence="3">
    <location>
        <position position="133"/>
    </location>
    <ligand>
        <name>Zn(2+)</name>
        <dbReference type="ChEBI" id="CHEBI:29105"/>
        <label>1</label>
    </ligand>
</feature>
<feature type="binding site" evidence="3">
    <location>
        <position position="139"/>
    </location>
    <ligand>
        <name>Zn(2+)</name>
        <dbReference type="ChEBI" id="CHEBI:29105"/>
        <label>1</label>
    </ligand>
</feature>
<feature type="binding site" evidence="3">
    <location>
        <position position="169"/>
    </location>
    <ligand>
        <name>Zn(2+)</name>
        <dbReference type="ChEBI" id="CHEBI:29105"/>
        <label>2</label>
    </ligand>
</feature>
<feature type="binding site" evidence="3">
    <location>
        <position position="172"/>
    </location>
    <ligand>
        <name>Zn(2+)</name>
        <dbReference type="ChEBI" id="CHEBI:29105"/>
        <label>2</label>
    </ligand>
</feature>
<feature type="binding site" evidence="3">
    <location>
        <position position="192"/>
    </location>
    <ligand>
        <name>Zn(2+)</name>
        <dbReference type="ChEBI" id="CHEBI:29105"/>
        <label>2</label>
    </ligand>
</feature>
<feature type="binding site" evidence="3">
    <location>
        <position position="197"/>
    </location>
    <ligand>
        <name>Zn(2+)</name>
        <dbReference type="ChEBI" id="CHEBI:29105"/>
        <label>2</label>
    </ligand>
</feature>
<feature type="splice variant" id="VSP_061677" description="In isoform 2 and isoform 3." evidence="8 9">
    <location>
        <begin position="1"/>
        <end position="104"/>
    </location>
</feature>
<feature type="splice variant" id="VSP_061678" description="In isoform 2." evidence="8">
    <location>
        <begin position="201"/>
        <end position="202"/>
    </location>
</feature>
<feature type="splice variant" id="VSP_061679" description="In isoform 3." evidence="9">
    <original>MESEDSTRFTDLLGQGPIVPGLDAPKDLAIPSELEEPINLSVKKPPLAPVVSTSTALQQYQNPKECENFEQ</original>
    <variation>VSPGEMLSKLPLFIIGQKIGHWDPYSDLSLTVLRPLMTTMSEFFDSCRHFTFERWKVRIPLASLTYWDKVP</variation>
    <location>
        <begin position="902"/>
        <end position="972"/>
    </location>
</feature>
<feature type="splice variant" id="VSP_061680" description="In isoform 2." evidence="8">
    <original>MESEDSTRFTDLLGQGPIVPGLDAPKDLAIPSE</original>
    <variation>VK</variation>
    <location>
        <begin position="902"/>
        <end position="934"/>
    </location>
</feature>
<feature type="splice variant" id="VSP_061681" description="In isoform 3." evidence="9">
    <location>
        <begin position="973"/>
        <end position="1351"/>
    </location>
</feature>
<feature type="turn" evidence="11">
    <location>
        <begin position="1109"/>
        <end position="1111"/>
    </location>
</feature>
<feature type="strand" evidence="11">
    <location>
        <begin position="1115"/>
        <end position="1119"/>
    </location>
</feature>
<feature type="strand" evidence="11">
    <location>
        <begin position="1121"/>
        <end position="1124"/>
    </location>
</feature>
<feature type="turn" evidence="11">
    <location>
        <begin position="1129"/>
        <end position="1131"/>
    </location>
</feature>
<feature type="strand" evidence="11">
    <location>
        <begin position="1132"/>
        <end position="1134"/>
    </location>
</feature>
<feature type="helix" evidence="11">
    <location>
        <begin position="1147"/>
        <end position="1149"/>
    </location>
</feature>
<feature type="helix" evidence="11">
    <location>
        <begin position="1179"/>
        <end position="1194"/>
    </location>
</feature>
<feature type="helix" evidence="11">
    <location>
        <begin position="1196"/>
        <end position="1201"/>
    </location>
</feature>
<feature type="strand" evidence="11">
    <location>
        <begin position="1209"/>
        <end position="1211"/>
    </location>
</feature>
<feature type="helix" evidence="11">
    <location>
        <begin position="1212"/>
        <end position="1215"/>
    </location>
</feature>
<feature type="helix" evidence="11">
    <location>
        <begin position="1222"/>
        <end position="1228"/>
    </location>
</feature>
<feature type="helix" evidence="11">
    <location>
        <begin position="1240"/>
        <end position="1257"/>
    </location>
</feature>
<feature type="helix" evidence="11">
    <location>
        <begin position="1263"/>
        <end position="1282"/>
    </location>
</feature>
<gene>
    <name type="primary">TRIM66</name>
    <name type="synonym">C11orf29</name>
    <name type="synonym">KIAA0298</name>
</gene>
<sequence>MSFMGLPLAGQKHCPKSGQMEAMVMTCSLCHQDLPGMGSHLLSCQHLLRKDCFQGLIQELGQIAKAHETVADELISCPGCERVYLTRDVTEHFFLHCVPTEQPKMARNCSECKEKRAAHILCTYCNRWLCSSCTEEHRHSPVPGGPFFPRAQKGSPGVNGGPGDFTLYCPLHTQEVLKLFCETCDMLTCHSCLVVEHKEHRCRHVEEVLQNQRMLLEGVTTQVAHKKSSLQTSAKQIEDRIFEVKHQHRKVENQIKMAKMVLMNELNKQANGLIEELEGITNERKRKLEQQLQSIMVLNRQFEHVQNFINWAVCSKTSVPFLFSKELIVFQMQRLLETSCNTDPGSPWSIRFTWEPNFWTKQLASLGCITTEGGQMSRADAPAYGGLQGSSPFYQSHQSPVAQQEALSHPSHKFQSPAVCSSSVCCSHCSPVSPSLKGQVPPPSIHPAHSFRQPPEMVPQQLGSLQCSALLPREKELACSPHPPKLLQPWLETQPPVEQESTSQRLGQQLTSQPVCIVPPQDVQQGAHAQPTLQTPSIQVQFGHHQKLKLSHFQQQPQQQLPPPPPPLPHPPPPLPPPPQQPHPPLPPSQHLASSQHESPPGPACSQNMDIMHHKFELEEMQKDLELLLQAQQPSLQLSQTKSPQHLQQTIVGQINYIVRQPAPVQSQSQEETLQATDEPPASQGSKPALPLDKNTAAALPQASGEETPLSVPPVDSTIQHSSPNVVRKHSTSLSIMGFSNTLEMELSSTRLERPLEPQIQSVSNLTAGAPQAVPSLLSAPPKMVSSLTSVQNQAMPSLTTSHLQTVPSLVHSTFQSMPNLISDSPQAMASLASDHPQAGPSLMSGHTQAVPSLATCPLQSIPPVSDMQPETGSSSSSGRTSGSLCPRDGADPSLENALCKMESEDSTRFTDLLGQGPIVPGLDAPKDLAIPSELEEPINLSVKKPPLAPVVSTSTALQQYQNPKECENFEQGALELDAKENQSIRAFNSEHKIPYVRLERLKICAASSGEMPVFKLKPQKNDQDGSFLLIIECGTESSSMSIKVSQDRLSEATQAPGLEGRKVTVTSLAGQRPPEVEGTSPEEHRLIPRTPGAKKGPPAPIENEDFCAVCLNGGELLCCDRCPKVFHLSCHVPALLSFPGGEWVCTLCRSLTQPEMEYDCENACYNQPGMRASPGLSMYDQKKCEKLVLSLCCNNLSLPFHEPVSPLARHYYQIIKRPMDLSIIRRKLQKKDPAHYTTPEEVVSDVRLMFWNCAKFNYPDSEVAEAGRCLEVFFEGWLKEIYPEKRFAQPRQEDSDSEEVSSESGCSTPQGFPWPPYMQEGIQPKRRRRHMENERAKRMSFRLANSISQV</sequence>